<organism>
    <name type="scientific">Mus musculus</name>
    <name type="common">Mouse</name>
    <dbReference type="NCBI Taxonomy" id="10090"/>
    <lineage>
        <taxon>Eukaryota</taxon>
        <taxon>Metazoa</taxon>
        <taxon>Chordata</taxon>
        <taxon>Craniata</taxon>
        <taxon>Vertebrata</taxon>
        <taxon>Euteleostomi</taxon>
        <taxon>Mammalia</taxon>
        <taxon>Eutheria</taxon>
        <taxon>Euarchontoglires</taxon>
        <taxon>Glires</taxon>
        <taxon>Rodentia</taxon>
        <taxon>Myomorpha</taxon>
        <taxon>Muroidea</taxon>
        <taxon>Muridae</taxon>
        <taxon>Murinae</taxon>
        <taxon>Mus</taxon>
        <taxon>Mus</taxon>
    </lineage>
</organism>
<keyword id="KW-1003">Cell membrane</keyword>
<keyword id="KW-1015">Disulfide bond</keyword>
<keyword id="KW-0325">Glycoprotein</keyword>
<keyword id="KW-0391">Immunity</keyword>
<keyword id="KW-0393">Immunoglobulin domain</keyword>
<keyword id="KW-0472">Membrane</keyword>
<keyword id="KW-0675">Receptor</keyword>
<keyword id="KW-1185">Reference proteome</keyword>
<keyword id="KW-0732">Signal</keyword>
<keyword id="KW-0812">Transmembrane</keyword>
<keyword id="KW-1133">Transmembrane helix</keyword>
<dbReference type="EMBL" id="AY457048">
    <property type="protein sequence ID" value="AAR27939.1"/>
    <property type="molecule type" value="mRNA"/>
</dbReference>
<dbReference type="EMBL" id="AF437879">
    <property type="protein sequence ID" value="AAN86136.1"/>
    <property type="molecule type" value="mRNA"/>
</dbReference>
<dbReference type="EMBL" id="AL607025">
    <property type="status" value="NOT_ANNOTATED_CDS"/>
    <property type="molecule type" value="Genomic_DNA"/>
</dbReference>
<dbReference type="EMBL" id="BC034097">
    <property type="protein sequence ID" value="AAH34097.1"/>
    <property type="molecule type" value="mRNA"/>
</dbReference>
<dbReference type="EMBL" id="BC039971">
    <property type="protein sequence ID" value="AAH39971.1"/>
    <property type="molecule type" value="mRNA"/>
</dbReference>
<dbReference type="CCDS" id="CCDS25618.1"/>
<dbReference type="RefSeq" id="NP_742047.1">
    <property type="nucleotide sequence ID" value="NM_172050.3"/>
</dbReference>
<dbReference type="RefSeq" id="XP_006533136.1">
    <property type="nucleotide sequence ID" value="XM_006533073.1"/>
</dbReference>
<dbReference type="RefSeq" id="XP_006533137.1">
    <property type="nucleotide sequence ID" value="XM_006533074.1"/>
</dbReference>
<dbReference type="SMR" id="Q8K249"/>
<dbReference type="FunCoup" id="Q8K249">
    <property type="interactions" value="1190"/>
</dbReference>
<dbReference type="STRING" id="10090.ENSMUSP00000054883"/>
<dbReference type="GlyCosmos" id="Q8K249">
    <property type="glycosylation" value="1 site, No reported glycans"/>
</dbReference>
<dbReference type="GlyGen" id="Q8K249">
    <property type="glycosylation" value="1 site"/>
</dbReference>
<dbReference type="PhosphoSitePlus" id="Q8K249"/>
<dbReference type="PaxDb" id="10090-ENSMUSP00000054883"/>
<dbReference type="Antibodypedia" id="2708">
    <property type="antibodies" value="299 antibodies from 27 providers"/>
</dbReference>
<dbReference type="DNASU" id="217306"/>
<dbReference type="Ensembl" id="ENSMUST00000062787.9">
    <property type="protein sequence ID" value="ENSMUSP00000054883.8"/>
    <property type="gene ID" value="ENSMUSG00000048498.9"/>
</dbReference>
<dbReference type="GeneID" id="217306"/>
<dbReference type="KEGG" id="mmu:217306"/>
<dbReference type="UCSC" id="uc007mgk.1">
    <property type="organism name" value="mouse"/>
</dbReference>
<dbReference type="AGR" id="MGI:2387602"/>
<dbReference type="CTD" id="342510"/>
<dbReference type="MGI" id="MGI:2387602">
    <property type="gene designation" value="Cd300e"/>
</dbReference>
<dbReference type="VEuPathDB" id="HostDB:ENSMUSG00000048498"/>
<dbReference type="eggNOG" id="ENOG502SRT9">
    <property type="taxonomic scope" value="Eukaryota"/>
</dbReference>
<dbReference type="GeneTree" id="ENSGT00940000162923"/>
<dbReference type="HOGENOM" id="CLU_051023_3_0_1"/>
<dbReference type="InParanoid" id="Q8K249"/>
<dbReference type="OMA" id="WCRIQTV"/>
<dbReference type="OrthoDB" id="8865476at2759"/>
<dbReference type="PhylomeDB" id="Q8K249"/>
<dbReference type="TreeFam" id="TF334441"/>
<dbReference type="Reactome" id="R-MMU-198933">
    <property type="pathway name" value="Immunoregulatory interactions between a Lymphoid and a non-Lymphoid cell"/>
</dbReference>
<dbReference type="Reactome" id="R-MMU-2172127">
    <property type="pathway name" value="DAP12 interactions"/>
</dbReference>
<dbReference type="BioGRID-ORCS" id="217306">
    <property type="hits" value="3 hits in 76 CRISPR screens"/>
</dbReference>
<dbReference type="ChiTaRS" id="Cyth2">
    <property type="organism name" value="mouse"/>
</dbReference>
<dbReference type="PRO" id="PR:Q8K249"/>
<dbReference type="Proteomes" id="UP000000589">
    <property type="component" value="Chromosome 11"/>
</dbReference>
<dbReference type="RNAct" id="Q8K249">
    <property type="molecule type" value="protein"/>
</dbReference>
<dbReference type="Bgee" id="ENSMUSG00000048498">
    <property type="expression patterns" value="Expressed in mesodermal cell in embryo and 21 other cell types or tissues"/>
</dbReference>
<dbReference type="GO" id="GO:0005886">
    <property type="term" value="C:plasma membrane"/>
    <property type="evidence" value="ECO:0007669"/>
    <property type="project" value="UniProtKB-SubCell"/>
</dbReference>
<dbReference type="GO" id="GO:0002376">
    <property type="term" value="P:immune system process"/>
    <property type="evidence" value="ECO:0007669"/>
    <property type="project" value="UniProtKB-KW"/>
</dbReference>
<dbReference type="CDD" id="cd05716">
    <property type="entry name" value="IgV_pIgR_like"/>
    <property type="match status" value="1"/>
</dbReference>
<dbReference type="FunFam" id="2.60.40.10:FF:000370">
    <property type="entry name" value="CMRF35-like molecule 1"/>
    <property type="match status" value="1"/>
</dbReference>
<dbReference type="Gene3D" id="2.60.40.10">
    <property type="entry name" value="Immunoglobulins"/>
    <property type="match status" value="1"/>
</dbReference>
<dbReference type="InterPro" id="IPR050671">
    <property type="entry name" value="CD300_family_receptors"/>
</dbReference>
<dbReference type="InterPro" id="IPR036179">
    <property type="entry name" value="Ig-like_dom_sf"/>
</dbReference>
<dbReference type="InterPro" id="IPR013783">
    <property type="entry name" value="Ig-like_fold"/>
</dbReference>
<dbReference type="InterPro" id="IPR003599">
    <property type="entry name" value="Ig_sub"/>
</dbReference>
<dbReference type="InterPro" id="IPR013106">
    <property type="entry name" value="Ig_V-set"/>
</dbReference>
<dbReference type="PANTHER" id="PTHR11860:SF89">
    <property type="entry name" value="CMRF35-LIKE MOLECULE 2"/>
    <property type="match status" value="1"/>
</dbReference>
<dbReference type="PANTHER" id="PTHR11860">
    <property type="entry name" value="POLYMERIC-IMMUNOGLOBULIN RECEPTOR"/>
    <property type="match status" value="1"/>
</dbReference>
<dbReference type="Pfam" id="PF07686">
    <property type="entry name" value="V-set"/>
    <property type="match status" value="1"/>
</dbReference>
<dbReference type="SMART" id="SM00409">
    <property type="entry name" value="IG"/>
    <property type="match status" value="1"/>
</dbReference>
<dbReference type="SUPFAM" id="SSF48726">
    <property type="entry name" value="Immunoglobulin"/>
    <property type="match status" value="1"/>
</dbReference>
<accession>Q8K249</accession>
<feature type="signal peptide" evidence="2">
    <location>
        <begin position="1"/>
        <end position="17"/>
    </location>
</feature>
<feature type="chain" id="PRO_0000320124" description="CMRF35-like molecule 2">
    <location>
        <begin position="18"/>
        <end position="196"/>
    </location>
</feature>
<feature type="topological domain" description="Extracellular" evidence="2">
    <location>
        <begin position="18"/>
        <end position="171"/>
    </location>
</feature>
<feature type="transmembrane region" description="Helical" evidence="2">
    <location>
        <begin position="172"/>
        <end position="192"/>
    </location>
</feature>
<feature type="topological domain" description="Cytoplasmic" evidence="2">
    <location>
        <begin position="193"/>
        <end position="196"/>
    </location>
</feature>
<feature type="domain" description="Ig-like V-type">
    <location>
        <begin position="18"/>
        <end position="122"/>
    </location>
</feature>
<feature type="glycosylation site" description="N-linked (GlcNAc...) asparagine" evidence="2">
    <location>
        <position position="84"/>
    </location>
</feature>
<feature type="disulfide bond" evidence="1">
    <location>
        <begin position="36"/>
        <end position="104"/>
    </location>
</feature>
<gene>
    <name type="primary">Cd300e</name>
    <name type="synonym">Cd300le</name>
    <name type="synonym">Clm2</name>
</gene>
<sequence>MRLCAGLLLLCFQGCLSLTGPGSVSGYVGGSLRVQCQYSPSYKGYMKYWCRGPHDTTCKTIVETDGSEKEKRSGPVSIRDHASNSTITVIMEDLSEDNAGSYWCKIQTSFIWDSWSRDPSVSVRVNVFPATTPTLPATTAILPLVNSGQNLRISTNVMFIFQLWSLLSSIQFQVLVFLKLPLFLSMLCAIFWVNRL</sequence>
<proteinExistence type="evidence at transcript level"/>
<evidence type="ECO:0000250" key="1"/>
<evidence type="ECO:0000255" key="2"/>
<evidence type="ECO:0000305" key="3"/>
<comment type="function">
    <text evidence="1">Probably acts as an activating receptor.</text>
</comment>
<comment type="subunit">
    <text evidence="1">Interacts with TYROBP.</text>
</comment>
<comment type="subcellular location">
    <subcellularLocation>
        <location evidence="3">Cell membrane</location>
        <topology evidence="3">Single-pass type I membrane protein</topology>
    </subcellularLocation>
</comment>
<comment type="similarity">
    <text evidence="3">Belongs to the CD300 family.</text>
</comment>
<reference key="1">
    <citation type="journal article" date="2003" name="J. Immunol.">
        <title>CMRF-35-like molecule-1, a novel mouse myeloid receptor, can inhibit osteoclast formation.</title>
        <authorList>
            <person name="Chung D.-H."/>
            <person name="Humphrey M.B."/>
            <person name="Nakamura M.C."/>
            <person name="Ginzinger D.G."/>
            <person name="Seaman W.E."/>
            <person name="Daws M.R."/>
        </authorList>
    </citation>
    <scope>NUCLEOTIDE SEQUENCE [MRNA]</scope>
    <source>
        <strain>C57BL/6J</strain>
    </source>
</reference>
<reference key="2">
    <citation type="submission" date="2001-10" db="EMBL/GenBank/DDBJ databases">
        <authorList>
            <person name="Colonna M."/>
        </authorList>
    </citation>
    <scope>NUCLEOTIDE SEQUENCE [MRNA]</scope>
</reference>
<reference key="3">
    <citation type="journal article" date="2009" name="PLoS Biol.">
        <title>Lineage-specific biology revealed by a finished genome assembly of the mouse.</title>
        <authorList>
            <person name="Church D.M."/>
            <person name="Goodstadt L."/>
            <person name="Hillier L.W."/>
            <person name="Zody M.C."/>
            <person name="Goldstein S."/>
            <person name="She X."/>
            <person name="Bult C.J."/>
            <person name="Agarwala R."/>
            <person name="Cherry J.L."/>
            <person name="DiCuccio M."/>
            <person name="Hlavina W."/>
            <person name="Kapustin Y."/>
            <person name="Meric P."/>
            <person name="Maglott D."/>
            <person name="Birtle Z."/>
            <person name="Marques A.C."/>
            <person name="Graves T."/>
            <person name="Zhou S."/>
            <person name="Teague B."/>
            <person name="Potamousis K."/>
            <person name="Churas C."/>
            <person name="Place M."/>
            <person name="Herschleb J."/>
            <person name="Runnheim R."/>
            <person name="Forrest D."/>
            <person name="Amos-Landgraf J."/>
            <person name="Schwartz D.C."/>
            <person name="Cheng Z."/>
            <person name="Lindblad-Toh K."/>
            <person name="Eichler E.E."/>
            <person name="Ponting C.P."/>
        </authorList>
    </citation>
    <scope>NUCLEOTIDE SEQUENCE [LARGE SCALE GENOMIC DNA]</scope>
    <source>
        <strain>C57BL/6J</strain>
    </source>
</reference>
<reference key="4">
    <citation type="journal article" date="2004" name="Genome Res.">
        <title>The status, quality, and expansion of the NIH full-length cDNA project: the Mammalian Gene Collection (MGC).</title>
        <authorList>
            <consortium name="The MGC Project Team"/>
        </authorList>
    </citation>
    <scope>NUCLEOTIDE SEQUENCE [LARGE SCALE MRNA]</scope>
    <source>
        <strain>FVB/N</strain>
        <tissue>Mammary tumor</tissue>
    </source>
</reference>
<name>CLM2_MOUSE</name>
<protein>
    <recommendedName>
        <fullName>CMRF35-like molecule 2</fullName>
        <shortName>CLM-2</shortName>
    </recommendedName>
    <alternativeName>
        <fullName>CD300 antigen-like family member E</fullName>
    </alternativeName>
    <cdAntigenName>CD300e</cdAntigenName>
</protein>